<organism>
    <name type="scientific">Mus musculus</name>
    <name type="common">Mouse</name>
    <dbReference type="NCBI Taxonomy" id="10090"/>
    <lineage>
        <taxon>Eukaryota</taxon>
        <taxon>Metazoa</taxon>
        <taxon>Chordata</taxon>
        <taxon>Craniata</taxon>
        <taxon>Vertebrata</taxon>
        <taxon>Euteleostomi</taxon>
        <taxon>Mammalia</taxon>
        <taxon>Eutheria</taxon>
        <taxon>Euarchontoglires</taxon>
        <taxon>Glires</taxon>
        <taxon>Rodentia</taxon>
        <taxon>Myomorpha</taxon>
        <taxon>Muroidea</taxon>
        <taxon>Muridae</taxon>
        <taxon>Murinae</taxon>
        <taxon>Mus</taxon>
        <taxon>Mus</taxon>
    </lineage>
</organism>
<protein>
    <recommendedName>
        <fullName>GTP-binding nuclear protein Ran</fullName>
        <ecNumber evidence="2">3.6.5.-</ecNumber>
    </recommendedName>
    <alternativeName>
        <fullName>GTPase Ran</fullName>
    </alternativeName>
    <alternativeName>
        <fullName>Ras-like protein TC4</fullName>
    </alternativeName>
    <alternativeName>
        <fullName>Ras-related nuclear protein</fullName>
    </alternativeName>
</protein>
<feature type="initiator methionine" description="Removed" evidence="11">
    <location>
        <position position="1"/>
    </location>
</feature>
<feature type="chain" id="PRO_0000208697" description="GTP-binding nuclear protein Ran">
    <location>
        <begin position="2"/>
        <end position="216"/>
    </location>
</feature>
<feature type="domain" description="Small GTPase Ran-type" evidence="3">
    <location>
        <begin position="7"/>
        <end position="171"/>
    </location>
</feature>
<feature type="region of interest" description="Switch-I" evidence="3">
    <location>
        <begin position="37"/>
        <end position="45"/>
    </location>
</feature>
<feature type="region of interest" description="Switch-II" evidence="3">
    <location>
        <begin position="68"/>
        <end position="84"/>
    </location>
</feature>
<feature type="region of interest" description="Interaction with RANBP1" evidence="2">
    <location>
        <begin position="211"/>
        <end position="216"/>
    </location>
</feature>
<feature type="binding site" evidence="1">
    <location>
        <begin position="18"/>
        <end position="25"/>
    </location>
    <ligand>
        <name>GTP</name>
        <dbReference type="ChEBI" id="CHEBI:37565"/>
    </ligand>
</feature>
<feature type="binding site" evidence="1">
    <location>
        <begin position="36"/>
        <end position="42"/>
    </location>
    <ligand>
        <name>GTP</name>
        <dbReference type="ChEBI" id="CHEBI:37565"/>
    </ligand>
</feature>
<feature type="binding site" evidence="1">
    <location>
        <position position="68"/>
    </location>
    <ligand>
        <name>GTP</name>
        <dbReference type="ChEBI" id="CHEBI:37565"/>
    </ligand>
</feature>
<feature type="binding site" evidence="1">
    <location>
        <begin position="122"/>
        <end position="125"/>
    </location>
    <ligand>
        <name>GTP</name>
        <dbReference type="ChEBI" id="CHEBI:37565"/>
    </ligand>
</feature>
<feature type="binding site" evidence="1">
    <location>
        <begin position="150"/>
        <end position="152"/>
    </location>
    <ligand>
        <name>GTP</name>
        <dbReference type="ChEBI" id="CHEBI:37565"/>
    </ligand>
</feature>
<feature type="site" description="Essential for GTP hydrolysis" evidence="2">
    <location>
        <position position="69"/>
    </location>
</feature>
<feature type="modified residue" description="N-acetylalanine" evidence="11">
    <location>
        <position position="2"/>
    </location>
</feature>
<feature type="modified residue" description="Phosphothreonine" evidence="2">
    <location>
        <position position="24"/>
    </location>
</feature>
<feature type="modified residue" description="N6-acetyllysine" evidence="2">
    <location>
        <position position="37"/>
    </location>
</feature>
<feature type="modified residue" description="N6-acetyllysine" evidence="2">
    <location>
        <position position="60"/>
    </location>
</feature>
<feature type="modified residue" description="N6-acetyllysine; alternate" evidence="2">
    <location>
        <position position="71"/>
    </location>
</feature>
<feature type="modified residue" description="N6-acetyllysine" evidence="2">
    <location>
        <position position="99"/>
    </location>
</feature>
<feature type="modified residue" description="N6-acetyllysine" evidence="2">
    <location>
        <position position="134"/>
    </location>
</feature>
<feature type="modified residue" description="N6-acetyllysine; alternate" evidence="13">
    <location>
        <position position="159"/>
    </location>
</feature>
<feature type="modified residue" description="N6-succinyllysine; alternate" evidence="13">
    <location>
        <position position="159"/>
    </location>
</feature>
<feature type="cross-link" description="Glycyl lysine isopeptide (Lys-Gly) (interchain with G-Cter in SUMO2); alternate" evidence="2">
    <location>
        <position position="71"/>
    </location>
</feature>
<feature type="cross-link" description="Glycyl lysine isopeptide (Lys-Gly) (interchain with G-Cter in ubiquitin); alternate" evidence="2">
    <location>
        <position position="71"/>
    </location>
</feature>
<feature type="cross-link" description="Glycyl lysine isopeptide (Lys-Gly) (interchain with G-Cter in SUMO2)" evidence="2">
    <location>
        <position position="152"/>
    </location>
</feature>
<feature type="mutagenesis site" description="No effect on RANBP10-binding. Loss of interaction with NEMP1." evidence="5 6">
    <original>T</original>
    <variation>N</variation>
    <location>
        <position position="24"/>
    </location>
</feature>
<feature type="mutagenesis site" description="Loss of interaction with NEMP1." evidence="6">
    <original>T</original>
    <variation>A</variation>
    <location>
        <position position="42"/>
    </location>
</feature>
<feature type="mutagenesis site" description="Strongly decreases interaction with RANGRF. Partial decrease in RANBP10-binding. No effect on interaction with NEMP1 and KPNB1." evidence="4 5 6">
    <original>Q</original>
    <variation>L</variation>
    <location>
        <position position="69"/>
    </location>
</feature>
<feature type="sequence conflict" description="In Ref. 4; BAB27105." evidence="12" ref="4">
    <original>V</original>
    <variation>G</variation>
    <location>
        <position position="9"/>
    </location>
</feature>
<feature type="sequence conflict" description="In Ref. 4; BAB27105." evidence="12" ref="4">
    <original>L</original>
    <variation>P</variation>
    <location>
        <position position="43"/>
    </location>
</feature>
<feature type="sequence conflict" description="In Ref. 6; AAK14838." evidence="12" ref="6">
    <original>P</original>
    <variation>T</variation>
    <location>
        <position position="49"/>
    </location>
</feature>
<accession>P62827</accession>
<accession>P17080</accession>
<accession>P28746</accession>
<accession>P28747</accession>
<accession>Q3U954</accession>
<accession>Q811M2</accession>
<accession>Q86V08</accession>
<accession>Q9CSP3</accession>
<accession>Q9CWI7</accession>
<accession>Q9CZA2</accession>
<accession>Q9UDJ5</accession>
<accession>Q9UEU9</accession>
<keyword id="KW-0007">Acetylation</keyword>
<keyword id="KW-0131">Cell cycle</keyword>
<keyword id="KW-0132">Cell division</keyword>
<keyword id="KW-0963">Cytoplasm</keyword>
<keyword id="KW-0903">Direct protein sequencing</keyword>
<keyword id="KW-0342">GTP-binding</keyword>
<keyword id="KW-0378">Hydrolase</keyword>
<keyword id="KW-1017">Isopeptide bond</keyword>
<keyword id="KW-0460">Magnesium</keyword>
<keyword id="KW-0479">Metal-binding</keyword>
<keyword id="KW-0498">Mitosis</keyword>
<keyword id="KW-0547">Nucleotide-binding</keyword>
<keyword id="KW-0539">Nucleus</keyword>
<keyword id="KW-0597">Phosphoprotein</keyword>
<keyword id="KW-0653">Protein transport</keyword>
<keyword id="KW-1185">Reference proteome</keyword>
<keyword id="KW-0813">Transport</keyword>
<keyword id="KW-0832">Ubl conjugation</keyword>
<gene>
    <name type="primary">Ran</name>
    <name type="synonym">Rasl2-8</name>
</gene>
<sequence>MAAQGEPQVQFKLVLVGDGGTGKTTFVKRHLTGEFEKKYVATLGVEVHPLVFHTNRGPIKFNVWDTAGQEKFGGLRDGYYIQAQCAIIMFDVTSRVTYKNVPNWHRDLVRVCENIPIVLCGNKVDIKDRKVKAKSIVFHRKKNLQYYDISAKSNYNFEKPFLWLARKLIGDPNLEFVAMPALAPPEVVMDPALAAQYEHDLEVAQTTALPDEDDDL</sequence>
<evidence type="ECO:0000250" key="1">
    <source>
        <dbReference type="UniProtKB" id="P62825"/>
    </source>
</evidence>
<evidence type="ECO:0000250" key="2">
    <source>
        <dbReference type="UniProtKB" id="P62826"/>
    </source>
</evidence>
<evidence type="ECO:0000255" key="3">
    <source>
        <dbReference type="PROSITE-ProRule" id="PRU00752"/>
    </source>
</evidence>
<evidence type="ECO:0000269" key="4">
    <source>
    </source>
</evidence>
<evidence type="ECO:0000269" key="5">
    <source>
    </source>
</evidence>
<evidence type="ECO:0000269" key="6">
    <source>
    </source>
</evidence>
<evidence type="ECO:0000269" key="7">
    <source>
    </source>
</evidence>
<evidence type="ECO:0000269" key="8">
    <source>
    </source>
</evidence>
<evidence type="ECO:0000269" key="9">
    <source>
    </source>
</evidence>
<evidence type="ECO:0000269" key="10">
    <source>
    </source>
</evidence>
<evidence type="ECO:0000269" key="11">
    <source ref="7"/>
</evidence>
<evidence type="ECO:0000305" key="12"/>
<evidence type="ECO:0007744" key="13">
    <source>
    </source>
</evidence>
<dbReference type="EC" id="3.6.5.-" evidence="2"/>
<dbReference type="EMBL" id="L32751">
    <property type="protein sequence ID" value="AAA64247.1"/>
    <property type="molecule type" value="mRNA"/>
</dbReference>
<dbReference type="EMBL" id="S83456">
    <property type="protein sequence ID" value="AAB50841.1"/>
    <property type="molecule type" value="mRNA"/>
</dbReference>
<dbReference type="EMBL" id="AF159256">
    <property type="protein sequence ID" value="AAD45343.1"/>
    <property type="molecule type" value="mRNA"/>
</dbReference>
<dbReference type="EMBL" id="AK010569">
    <property type="protein sequence ID" value="BAB27034.1"/>
    <property type="molecule type" value="mRNA"/>
</dbReference>
<dbReference type="EMBL" id="AK010672">
    <property type="protein sequence ID" value="BAB27105.1"/>
    <property type="molecule type" value="mRNA"/>
</dbReference>
<dbReference type="EMBL" id="AK012268">
    <property type="status" value="NOT_ANNOTATED_CDS"/>
    <property type="molecule type" value="mRNA"/>
</dbReference>
<dbReference type="EMBL" id="AK012844">
    <property type="status" value="NOT_ANNOTATED_CDS"/>
    <property type="molecule type" value="mRNA"/>
</dbReference>
<dbReference type="EMBL" id="AK075900">
    <property type="protein sequence ID" value="BAC36040.1"/>
    <property type="molecule type" value="mRNA"/>
</dbReference>
<dbReference type="EMBL" id="AK087974">
    <property type="protein sequence ID" value="BAC40068.1"/>
    <property type="molecule type" value="mRNA"/>
</dbReference>
<dbReference type="EMBL" id="AK151341">
    <property type="protein sequence ID" value="BAE30319.1"/>
    <property type="molecule type" value="mRNA"/>
</dbReference>
<dbReference type="EMBL" id="AK151937">
    <property type="protein sequence ID" value="BAE30813.1"/>
    <property type="molecule type" value="mRNA"/>
</dbReference>
<dbReference type="EMBL" id="AK153197">
    <property type="protein sequence ID" value="BAE31797.1"/>
    <property type="molecule type" value="mRNA"/>
</dbReference>
<dbReference type="EMBL" id="AK153411">
    <property type="protein sequence ID" value="BAE31971.1"/>
    <property type="molecule type" value="mRNA"/>
</dbReference>
<dbReference type="EMBL" id="AK160647">
    <property type="protein sequence ID" value="BAE35939.1"/>
    <property type="molecule type" value="mRNA"/>
</dbReference>
<dbReference type="EMBL" id="AK167040">
    <property type="protein sequence ID" value="BAE39208.1"/>
    <property type="molecule type" value="mRNA"/>
</dbReference>
<dbReference type="EMBL" id="AK168183">
    <property type="protein sequence ID" value="BAE40143.1"/>
    <property type="molecule type" value="mRNA"/>
</dbReference>
<dbReference type="EMBL" id="BC014829">
    <property type="protein sequence ID" value="AAH14829.3"/>
    <property type="molecule type" value="mRNA"/>
</dbReference>
<dbReference type="EMBL" id="BC083356">
    <property type="protein sequence ID" value="AAH83356.1"/>
    <property type="molecule type" value="mRNA"/>
</dbReference>
<dbReference type="EMBL" id="M79316">
    <property type="protein sequence ID" value="AAK14838.1"/>
    <property type="molecule type" value="mRNA"/>
</dbReference>
<dbReference type="CCDS" id="CCDS19693.1"/>
<dbReference type="PIR" id="I57020">
    <property type="entry name" value="I57020"/>
</dbReference>
<dbReference type="PIR" id="JH0654">
    <property type="entry name" value="JH0654"/>
</dbReference>
<dbReference type="RefSeq" id="NP_001408127.1">
    <property type="nucleotide sequence ID" value="NM_001421198.1"/>
</dbReference>
<dbReference type="RefSeq" id="NP_033417.1">
    <property type="nucleotide sequence ID" value="NM_009391.4"/>
</dbReference>
<dbReference type="RefSeq" id="XP_006504343.1">
    <property type="nucleotide sequence ID" value="XM_006504280.3"/>
</dbReference>
<dbReference type="BMRB" id="P62827"/>
<dbReference type="SMR" id="P62827"/>
<dbReference type="BioGRID" id="202580">
    <property type="interactions" value="61"/>
</dbReference>
<dbReference type="FunCoup" id="P62827">
    <property type="interactions" value="3657"/>
</dbReference>
<dbReference type="IntAct" id="P62827">
    <property type="interactions" value="6"/>
</dbReference>
<dbReference type="MINT" id="P62827"/>
<dbReference type="STRING" id="10090.ENSMUSP00000106975"/>
<dbReference type="GlyGen" id="P62827">
    <property type="glycosylation" value="1 site, 1 O-linked glycan (1 site)"/>
</dbReference>
<dbReference type="iPTMnet" id="P62827"/>
<dbReference type="PhosphoSitePlus" id="P62827"/>
<dbReference type="SwissPalm" id="P62827"/>
<dbReference type="REPRODUCTION-2DPAGE" id="P62827"/>
<dbReference type="CPTAC" id="non-CPTAC-3936"/>
<dbReference type="jPOST" id="P62827"/>
<dbReference type="PaxDb" id="10090-ENSMUSP00000031383"/>
<dbReference type="PeptideAtlas" id="P62827"/>
<dbReference type="ProteomicsDB" id="255095"/>
<dbReference type="Pumba" id="P62827"/>
<dbReference type="DNASU" id="19384"/>
<dbReference type="Ensembl" id="ENSMUST00000031383.14">
    <property type="protein sequence ID" value="ENSMUSP00000031383.8"/>
    <property type="gene ID" value="ENSMUSG00000029430.14"/>
</dbReference>
<dbReference type="Ensembl" id="ENSMUST00000111343.2">
    <property type="protein sequence ID" value="ENSMUSP00000106975.2"/>
    <property type="gene ID" value="ENSMUSG00000029430.14"/>
</dbReference>
<dbReference type="GeneID" id="19384"/>
<dbReference type="KEGG" id="mmu:19384"/>
<dbReference type="UCSC" id="uc008zsr.1">
    <property type="organism name" value="mouse"/>
</dbReference>
<dbReference type="AGR" id="MGI:1333112"/>
<dbReference type="CTD" id="5901"/>
<dbReference type="MGI" id="MGI:1333112">
    <property type="gene designation" value="Ran"/>
</dbReference>
<dbReference type="VEuPathDB" id="HostDB:ENSMUSG00000029430"/>
<dbReference type="eggNOG" id="KOG0096">
    <property type="taxonomic scope" value="Eukaryota"/>
</dbReference>
<dbReference type="GeneTree" id="ENSGT00940000153786"/>
<dbReference type="HOGENOM" id="CLU_041217_13_0_1"/>
<dbReference type="InParanoid" id="P62827"/>
<dbReference type="OMA" id="FNAWDTA"/>
<dbReference type="OrthoDB" id="48625at2759"/>
<dbReference type="PhylomeDB" id="P62827"/>
<dbReference type="TreeFam" id="TF106302"/>
<dbReference type="Reactome" id="R-MMU-1655829">
    <property type="pathway name" value="Regulation of cholesterol biosynthesis by SREBP (SREBF)"/>
</dbReference>
<dbReference type="Reactome" id="R-MMU-5578749">
    <property type="pathway name" value="Transcriptional regulation by small RNAs"/>
</dbReference>
<dbReference type="Reactome" id="R-MMU-9615933">
    <property type="pathway name" value="Postmitotic nuclear pore complex (NPC) reformation"/>
</dbReference>
<dbReference type="BioGRID-ORCS" id="19384">
    <property type="hits" value="32 hits in 81 CRISPR screens"/>
</dbReference>
<dbReference type="ChiTaRS" id="Ran">
    <property type="organism name" value="mouse"/>
</dbReference>
<dbReference type="PRO" id="PR:P62827"/>
<dbReference type="Proteomes" id="UP000000589">
    <property type="component" value="Chromosome 5"/>
</dbReference>
<dbReference type="RNAct" id="P62827">
    <property type="molecule type" value="protein"/>
</dbReference>
<dbReference type="Bgee" id="ENSMUSG00000029430">
    <property type="expression patterns" value="Expressed in mesodermal cell in embryo and 285 other cell types or tissues"/>
</dbReference>
<dbReference type="GO" id="GO:0005814">
    <property type="term" value="C:centriole"/>
    <property type="evidence" value="ECO:0007669"/>
    <property type="project" value="Ensembl"/>
</dbReference>
<dbReference type="GO" id="GO:0000785">
    <property type="term" value="C:chromatin"/>
    <property type="evidence" value="ECO:0007669"/>
    <property type="project" value="Ensembl"/>
</dbReference>
<dbReference type="GO" id="GO:0005737">
    <property type="term" value="C:cytoplasm"/>
    <property type="evidence" value="ECO:0000314"/>
    <property type="project" value="MGI"/>
</dbReference>
<dbReference type="GO" id="GO:0005829">
    <property type="term" value="C:cytosol"/>
    <property type="evidence" value="ECO:0007669"/>
    <property type="project" value="UniProtKB-SubCell"/>
</dbReference>
<dbReference type="GO" id="GO:0001673">
    <property type="term" value="C:male germ cell nucleus"/>
    <property type="evidence" value="ECO:0007669"/>
    <property type="project" value="Ensembl"/>
</dbReference>
<dbReference type="GO" id="GO:0002177">
    <property type="term" value="C:manchette"/>
    <property type="evidence" value="ECO:0007669"/>
    <property type="project" value="Ensembl"/>
</dbReference>
<dbReference type="GO" id="GO:0042470">
    <property type="term" value="C:melanosome"/>
    <property type="evidence" value="ECO:0007669"/>
    <property type="project" value="UniProtKB-SubCell"/>
</dbReference>
<dbReference type="GO" id="GO:0030496">
    <property type="term" value="C:midbody"/>
    <property type="evidence" value="ECO:0007669"/>
    <property type="project" value="Ensembl"/>
</dbReference>
<dbReference type="GO" id="GO:0005635">
    <property type="term" value="C:nuclear envelope"/>
    <property type="evidence" value="ECO:0000314"/>
    <property type="project" value="UniProtKB"/>
</dbReference>
<dbReference type="GO" id="GO:0005643">
    <property type="term" value="C:nuclear pore"/>
    <property type="evidence" value="ECO:0007669"/>
    <property type="project" value="Ensembl"/>
</dbReference>
<dbReference type="GO" id="GO:0005730">
    <property type="term" value="C:nucleolus"/>
    <property type="evidence" value="ECO:0007669"/>
    <property type="project" value="Ensembl"/>
</dbReference>
<dbReference type="GO" id="GO:0005654">
    <property type="term" value="C:nucleoplasm"/>
    <property type="evidence" value="ECO:0007669"/>
    <property type="project" value="Ensembl"/>
</dbReference>
<dbReference type="GO" id="GO:0005634">
    <property type="term" value="C:nucleus"/>
    <property type="evidence" value="ECO:0000314"/>
    <property type="project" value="UniProtKB"/>
</dbReference>
<dbReference type="GO" id="GO:0055037">
    <property type="term" value="C:recycling endosome"/>
    <property type="evidence" value="ECO:0007669"/>
    <property type="project" value="Ensembl"/>
</dbReference>
<dbReference type="GO" id="GO:0042565">
    <property type="term" value="C:RNA nuclear export complex"/>
    <property type="evidence" value="ECO:0007669"/>
    <property type="project" value="Ensembl"/>
</dbReference>
<dbReference type="GO" id="GO:0036126">
    <property type="term" value="C:sperm flagellum"/>
    <property type="evidence" value="ECO:0007669"/>
    <property type="project" value="Ensembl"/>
</dbReference>
<dbReference type="GO" id="GO:0045505">
    <property type="term" value="F:dynein intermediate chain binding"/>
    <property type="evidence" value="ECO:0007669"/>
    <property type="project" value="Ensembl"/>
</dbReference>
<dbReference type="GO" id="GO:0003925">
    <property type="term" value="F:G protein activity"/>
    <property type="evidence" value="ECO:0007669"/>
    <property type="project" value="Ensembl"/>
</dbReference>
<dbReference type="GO" id="GO:0019003">
    <property type="term" value="F:GDP binding"/>
    <property type="evidence" value="ECO:0007669"/>
    <property type="project" value="Ensembl"/>
</dbReference>
<dbReference type="GO" id="GO:0005525">
    <property type="term" value="F:GTP binding"/>
    <property type="evidence" value="ECO:0000250"/>
    <property type="project" value="UniProtKB"/>
</dbReference>
<dbReference type="GO" id="GO:0003924">
    <property type="term" value="F:GTPase activity"/>
    <property type="evidence" value="ECO:0000250"/>
    <property type="project" value="UniProtKB"/>
</dbReference>
<dbReference type="GO" id="GO:0061676">
    <property type="term" value="F:importin-alpha family protein binding"/>
    <property type="evidence" value="ECO:0007669"/>
    <property type="project" value="Ensembl"/>
</dbReference>
<dbReference type="GO" id="GO:0000287">
    <property type="term" value="F:magnesium ion binding"/>
    <property type="evidence" value="ECO:0000250"/>
    <property type="project" value="UniProtKB"/>
</dbReference>
<dbReference type="GO" id="GO:0070883">
    <property type="term" value="F:pre-miRNA binding"/>
    <property type="evidence" value="ECO:0007669"/>
    <property type="project" value="Ensembl"/>
</dbReference>
<dbReference type="GO" id="GO:0019904">
    <property type="term" value="F:protein domain specific binding"/>
    <property type="evidence" value="ECO:0007669"/>
    <property type="project" value="Ensembl"/>
</dbReference>
<dbReference type="GO" id="GO:0046982">
    <property type="term" value="F:protein heterodimerization activity"/>
    <property type="evidence" value="ECO:0007669"/>
    <property type="project" value="Ensembl"/>
</dbReference>
<dbReference type="GO" id="GO:0044877">
    <property type="term" value="F:protein-containing complex binding"/>
    <property type="evidence" value="ECO:0007669"/>
    <property type="project" value="Ensembl"/>
</dbReference>
<dbReference type="GO" id="GO:0030036">
    <property type="term" value="P:actin cytoskeleton organization"/>
    <property type="evidence" value="ECO:0000315"/>
    <property type="project" value="MGI"/>
</dbReference>
<dbReference type="GO" id="GO:0051301">
    <property type="term" value="P:cell division"/>
    <property type="evidence" value="ECO:0007669"/>
    <property type="project" value="UniProtKB-KW"/>
</dbReference>
<dbReference type="GO" id="GO:0071389">
    <property type="term" value="P:cellular response to mineralocorticoid stimulus"/>
    <property type="evidence" value="ECO:0007669"/>
    <property type="project" value="Ensembl"/>
</dbReference>
<dbReference type="GO" id="GO:0046039">
    <property type="term" value="P:GTP metabolic process"/>
    <property type="evidence" value="ECO:0000250"/>
    <property type="project" value="UniProtKB"/>
</dbReference>
<dbReference type="GO" id="GO:0021766">
    <property type="term" value="P:hippocampus development"/>
    <property type="evidence" value="ECO:0007669"/>
    <property type="project" value="Ensembl"/>
</dbReference>
<dbReference type="GO" id="GO:0000070">
    <property type="term" value="P:mitotic sister chromatid segregation"/>
    <property type="evidence" value="ECO:0000250"/>
    <property type="project" value="UniProtKB"/>
</dbReference>
<dbReference type="GO" id="GO:0042307">
    <property type="term" value="P:positive regulation of protein import into nucleus"/>
    <property type="evidence" value="ECO:0007669"/>
    <property type="project" value="Ensembl"/>
</dbReference>
<dbReference type="GO" id="GO:0006611">
    <property type="term" value="P:protein export from nucleus"/>
    <property type="evidence" value="ECO:0000250"/>
    <property type="project" value="UniProtKB"/>
</dbReference>
<dbReference type="GO" id="GO:0006606">
    <property type="term" value="P:protein import into nucleus"/>
    <property type="evidence" value="ECO:0000314"/>
    <property type="project" value="MGI"/>
</dbReference>
<dbReference type="GO" id="GO:0008104">
    <property type="term" value="P:protein localization"/>
    <property type="evidence" value="ECO:0000315"/>
    <property type="project" value="MGI"/>
</dbReference>
<dbReference type="GO" id="GO:1902570">
    <property type="term" value="P:protein localization to nucleolus"/>
    <property type="evidence" value="ECO:0007669"/>
    <property type="project" value="Ensembl"/>
</dbReference>
<dbReference type="GO" id="GO:0031503">
    <property type="term" value="P:protein-containing complex localization"/>
    <property type="evidence" value="ECO:0000315"/>
    <property type="project" value="MGI"/>
</dbReference>
<dbReference type="GO" id="GO:0000055">
    <property type="term" value="P:ribosomal large subunit export from nucleus"/>
    <property type="evidence" value="ECO:0007669"/>
    <property type="project" value="Ensembl"/>
</dbReference>
<dbReference type="GO" id="GO:0000056">
    <property type="term" value="P:ribosomal small subunit export from nucleus"/>
    <property type="evidence" value="ECO:0007669"/>
    <property type="project" value="Ensembl"/>
</dbReference>
<dbReference type="GO" id="GO:0061015">
    <property type="term" value="P:snRNA import into nucleus"/>
    <property type="evidence" value="ECO:0000250"/>
    <property type="project" value="UniProtKB"/>
</dbReference>
<dbReference type="GO" id="GO:0007286">
    <property type="term" value="P:spermatid development"/>
    <property type="evidence" value="ECO:0007669"/>
    <property type="project" value="Ensembl"/>
</dbReference>
<dbReference type="CDD" id="cd00877">
    <property type="entry name" value="Ran"/>
    <property type="match status" value="1"/>
</dbReference>
<dbReference type="FunFam" id="3.40.50.300:FF:000131">
    <property type="entry name" value="GTP-binding nuclear protein Ran"/>
    <property type="match status" value="1"/>
</dbReference>
<dbReference type="Gene3D" id="3.40.50.300">
    <property type="entry name" value="P-loop containing nucleotide triphosphate hydrolases"/>
    <property type="match status" value="1"/>
</dbReference>
<dbReference type="InterPro" id="IPR027417">
    <property type="entry name" value="P-loop_NTPase"/>
</dbReference>
<dbReference type="InterPro" id="IPR002041">
    <property type="entry name" value="Ran_GTPase"/>
</dbReference>
<dbReference type="InterPro" id="IPR005225">
    <property type="entry name" value="Small_GTP-bd"/>
</dbReference>
<dbReference type="InterPro" id="IPR001806">
    <property type="entry name" value="Small_GTPase"/>
</dbReference>
<dbReference type="NCBIfam" id="TIGR00231">
    <property type="entry name" value="small_GTP"/>
    <property type="match status" value="1"/>
</dbReference>
<dbReference type="PANTHER" id="PTHR24071:SF0">
    <property type="entry name" value="GTP-BINDING NUCLEAR PROTEIN RAN"/>
    <property type="match status" value="1"/>
</dbReference>
<dbReference type="PANTHER" id="PTHR24071">
    <property type="entry name" value="RAN GTPASE"/>
    <property type="match status" value="1"/>
</dbReference>
<dbReference type="Pfam" id="PF00071">
    <property type="entry name" value="Ras"/>
    <property type="match status" value="1"/>
</dbReference>
<dbReference type="PRINTS" id="PR00627">
    <property type="entry name" value="GTPRANTC4"/>
</dbReference>
<dbReference type="SMART" id="SM00175">
    <property type="entry name" value="RAB"/>
    <property type="match status" value="1"/>
</dbReference>
<dbReference type="SMART" id="SM00176">
    <property type="entry name" value="RAN"/>
    <property type="match status" value="1"/>
</dbReference>
<dbReference type="SMART" id="SM00173">
    <property type="entry name" value="RAS"/>
    <property type="match status" value="1"/>
</dbReference>
<dbReference type="SMART" id="SM00174">
    <property type="entry name" value="RHO"/>
    <property type="match status" value="1"/>
</dbReference>
<dbReference type="SUPFAM" id="SSF52540">
    <property type="entry name" value="P-loop containing nucleoside triphosphate hydrolases"/>
    <property type="match status" value="1"/>
</dbReference>
<dbReference type="PROSITE" id="PS51418">
    <property type="entry name" value="RAN"/>
    <property type="match status" value="1"/>
</dbReference>
<proteinExistence type="evidence at protein level"/>
<name>RAN_MOUSE</name>
<comment type="function">
    <text evidence="2">GTPase involved in nucleocytoplasmic transport, participating both to the import and the export from the nucleus of proteins and RNAs. Switches between a cytoplasmic GDP- and a nuclear GTP-bound state by nucleotide exchange and GTP hydrolysis. Nuclear import receptors such as importin beta bind their substrates only in the absence of GTP-bound RAN and release them upon direct interaction with GTP-bound RAN, while export receptors behave in the opposite way. Thereby, RAN controls cargo loading and release by transport receptors in the proper compartment and ensures the directionality of the transport. Interaction with RANBP1 induces a conformation change in the complex formed by XPO1 and RAN that triggers the release of the nuclear export signal of cargo proteins. RAN (GTP-bound form) triggers microtubule assembly at mitotic chromosomes and is required for normal mitotic spindle assembly and chromosome segregation. Required for normal progress through mitosis. The complex with BIRC5/survivin plays a role in mitotic spindle formation by serving as a physical scaffold to help deliver the RAN effector molecule TPX2 to microtubules. Acts as a negative regulator of the kinase activity of VRK1 and VRK2. Enhances AR-mediated transactivation.</text>
</comment>
<comment type="catalytic activity">
    <reaction evidence="2">
        <text>GTP + H2O = GDP + phosphate + H(+)</text>
        <dbReference type="Rhea" id="RHEA:19669"/>
        <dbReference type="ChEBI" id="CHEBI:15377"/>
        <dbReference type="ChEBI" id="CHEBI:15378"/>
        <dbReference type="ChEBI" id="CHEBI:37565"/>
        <dbReference type="ChEBI" id="CHEBI:43474"/>
        <dbReference type="ChEBI" id="CHEBI:58189"/>
    </reaction>
    <physiologicalReaction direction="left-to-right" evidence="2">
        <dbReference type="Rhea" id="RHEA:19670"/>
    </physiologicalReaction>
</comment>
<comment type="cofactor">
    <cofactor evidence="2">
        <name>Mg(2+)</name>
        <dbReference type="ChEBI" id="CHEBI:18420"/>
    </cofactor>
    <text evidence="2">Mg(2+) interacts primarily with the phosphate groups of the bound guanine nucleotide.</text>
</comment>
<comment type="subunit">
    <text evidence="1 2 4 5 6 7 9 10">Monomer. Interacts with RANGAP1, which promotes RAN-mediated GTP hydrolysis. Interacts with KPNB1. Interaction with KPNB1 inhibits RANGAP1-mediated stimulation of GTPase activity. Interacts with RCC1 which promotes the exchange of RAN-bound GDP by GTP. Interaction with KPNB1 inhibits RCC1-mediated exchange of RAN-bound GDP by GTP. Interacts (GTP-bound form) with TNPO1; the interaction is direct. Interacts (GTP-bound form) with TNPO3; the interaction is direct. Interacts with KPNB1 and with TNPO1; both inhibit RAN GTPase activity (By similarity). Interacts (via C-terminus) with RANBP1, which alleviates the inhibition of RAN GTPase activity (PubMed:7891706, PubMed:9428644). Interacts with RANGRF, which promotes the release of bound guanine nucleotide (PubMed:10811801). RANGRF and RCC1 compete for an overlapping binding site on RAN. Identified in a complex with KPNA2 and CSE1L; interaction with RANBP1 mediates dissociation of RAN from this complex. Interaction with both RANBP1 and KPNA2 promotes dissociation of the complex between RAN and KPNB1. Identified in a complex composed of RAN, RANGAP1 and RANBP1. Identified in a complex that contains TNPO1, RAN and RANBP1. Identified in a nuclear export complex with XPO1. Found in a nuclear export complex with RANBP3 and XPO1. Interacts with RANBP2/NUP358. Interaction with RANBP1 or RANBP2 induces a conformation change in the complex formed by XPO1 and RAN that triggers the release of the nuclear export signal of cargo proteins. Component of a nuclear export receptor complex composed of KPNB1, RAN, SNUPN and XPO1 (By similarity). Found in a nuclear export complex with RAN, XPO5 and pre-miRNA (By similarity). Interacts (GTP-bound form) with XPO5 (By similarity). Part of a complex consisting of RANBP9, RAN, DYRK1B and COPS5 (By similarity). Interacts with RANBP9 and RANBP10 (PubMed:18347012). Interacts in its GTP-bound form with BIRC5/survivin at S and M phases of the cell cycle. Interacts with TERT; the interaction requires hydrogen peroxide-mediated phosphorylation of TERT and transports TERT to the nucleus. Interacts with MAD2L2. Interacts with VRK1 and VRK3. Interacts with VRK2 (By similarity). Interacts with NEMP1 and KPNB1 (PubMed:25946333). Interacts (GDP-bound form) with NUTF2; regulates RAN nuclear import. Interacts with CAPG; mediates CAPG nuclear import. Interacts with NUP153. Interacts with the AR N-terminal poly-Gln region; the interaction with AR is inversely correlated with the poly-Gln length (By similarity). Interacts with MYCBP2, which promotes RAN-mediated GTP hydrolysis (PubMed:26304119). Interacts with EPG5 (By similarity).</text>
</comment>
<comment type="interaction">
    <interactant intactId="EBI-286564">
        <id>P62827</id>
    </interactant>
    <interactant intactId="EBI-12595939">
        <id>Q6ZQE4</id>
        <label>Nemp1</label>
    </interactant>
    <organismsDiffer>false</organismsDiffer>
    <experiments>7</experiments>
</comment>
<comment type="subcellular location">
    <subcellularLocation>
        <location evidence="5 6">Nucleus</location>
    </subcellularLocation>
    <subcellularLocation>
        <location evidence="6">Nucleus envelope</location>
    </subcellularLocation>
    <subcellularLocation>
        <location evidence="2">Cytoplasm</location>
        <location evidence="2">Cytosol</location>
    </subcellularLocation>
    <subcellularLocation>
        <location evidence="5">Cytoplasm</location>
    </subcellularLocation>
    <subcellularLocation>
        <location evidence="2">Melanosome</location>
    </subcellularLocation>
    <text evidence="2">Predominantly nuclear during interphase. Becomes dispersed throughout the cytoplasm during mitosis (By similarity). Identified by mass spectrometry in melanosome fractions from stage I to stage IV (By similarity).</text>
</comment>
<comment type="tissue specificity">
    <text evidence="8">Expressed in a variety of tissues, including testis.</text>
</comment>
<comment type="PTM">
    <text evidence="2">Acetylation by KAT5 at Lys-134 is increased during mitosis, impairs RANGRF binding and enhances RCC1 binding. Acetylation at Lys-37 enhances the association with nuclear export components. Deacetylation of Lys-37 by SIRT7 regulates the nuclear export of NF-kappa-B subunit RELA/p65.</text>
</comment>
<comment type="similarity">
    <text evidence="3 12">Belongs to the small GTPase superfamily. Ran family.</text>
</comment>
<reference key="1">
    <citation type="journal article" date="1994" name="Mamm. Genome">
        <title>Tissue-specific expression of Ran isoforms in the mouse.</title>
        <authorList>
            <person name="Coutavas E.E."/>
            <person name="Hsieh C.M."/>
            <person name="Ren M."/>
            <person name="Drivas G.T."/>
            <person name="Rush M.G."/>
            <person name="D'Eustachio P.D."/>
        </authorList>
    </citation>
    <scope>NUCLEOTIDE SEQUENCE [MRNA]</scope>
    <scope>TISSUE SPECIFICITY</scope>
    <source>
        <tissue>Testis</tissue>
    </source>
</reference>
<reference key="2">
    <citation type="journal article" date="1996" name="Infect. Immun.">
        <title>Restoration of lipopolysaccharide-mediated B-cell response after expression of a cDNA encoding a GTP-binding protein.</title>
        <authorList>
            <person name="Kang A.D."/>
            <person name="Wong P.M."/>
            <person name="Chen H."/>
            <person name="Castagna R."/>
            <person name="Chung S.W."/>
            <person name="Sultzer B.M."/>
        </authorList>
    </citation>
    <scope>NUCLEOTIDE SEQUENCE [MRNA]</scope>
    <source>
        <strain>C3H/HeJ</strain>
        <tissue>Spleen</tissue>
    </source>
</reference>
<reference key="3">
    <citation type="journal article" date="1999" name="Proc. Natl. Acad. Sci. U.S.A.">
        <title>Lps(d)/Ran of endotoxin-resistant C3H/HeJ mice is defective in mediating lipopolysaccharide endotoxin responses.</title>
        <authorList>
            <person name="Wong P.M.C."/>
            <person name="Kang A."/>
            <person name="Chen H."/>
            <person name="Yuan Q."/>
            <person name="Fan P."/>
            <person name="Sultzer B.M."/>
            <person name="Kan Y.W."/>
            <person name="Chung S.-W."/>
        </authorList>
    </citation>
    <scope>NUCLEOTIDE SEQUENCE [MRNA]</scope>
    <source>
        <strain>C3H/HeJ</strain>
    </source>
</reference>
<reference key="4">
    <citation type="journal article" date="2005" name="Science">
        <title>The transcriptional landscape of the mammalian genome.</title>
        <authorList>
            <person name="Carninci P."/>
            <person name="Kasukawa T."/>
            <person name="Katayama S."/>
            <person name="Gough J."/>
            <person name="Frith M.C."/>
            <person name="Maeda N."/>
            <person name="Oyama R."/>
            <person name="Ravasi T."/>
            <person name="Lenhard B."/>
            <person name="Wells C."/>
            <person name="Kodzius R."/>
            <person name="Shimokawa K."/>
            <person name="Bajic V.B."/>
            <person name="Brenner S.E."/>
            <person name="Batalov S."/>
            <person name="Forrest A.R."/>
            <person name="Zavolan M."/>
            <person name="Davis M.J."/>
            <person name="Wilming L.G."/>
            <person name="Aidinis V."/>
            <person name="Allen J.E."/>
            <person name="Ambesi-Impiombato A."/>
            <person name="Apweiler R."/>
            <person name="Aturaliya R.N."/>
            <person name="Bailey T.L."/>
            <person name="Bansal M."/>
            <person name="Baxter L."/>
            <person name="Beisel K.W."/>
            <person name="Bersano T."/>
            <person name="Bono H."/>
            <person name="Chalk A.M."/>
            <person name="Chiu K.P."/>
            <person name="Choudhary V."/>
            <person name="Christoffels A."/>
            <person name="Clutterbuck D.R."/>
            <person name="Crowe M.L."/>
            <person name="Dalla E."/>
            <person name="Dalrymple B.P."/>
            <person name="de Bono B."/>
            <person name="Della Gatta G."/>
            <person name="di Bernardo D."/>
            <person name="Down T."/>
            <person name="Engstrom P."/>
            <person name="Fagiolini M."/>
            <person name="Faulkner G."/>
            <person name="Fletcher C.F."/>
            <person name="Fukushima T."/>
            <person name="Furuno M."/>
            <person name="Futaki S."/>
            <person name="Gariboldi M."/>
            <person name="Georgii-Hemming P."/>
            <person name="Gingeras T.R."/>
            <person name="Gojobori T."/>
            <person name="Green R.E."/>
            <person name="Gustincich S."/>
            <person name="Harbers M."/>
            <person name="Hayashi Y."/>
            <person name="Hensch T.K."/>
            <person name="Hirokawa N."/>
            <person name="Hill D."/>
            <person name="Huminiecki L."/>
            <person name="Iacono M."/>
            <person name="Ikeo K."/>
            <person name="Iwama A."/>
            <person name="Ishikawa T."/>
            <person name="Jakt M."/>
            <person name="Kanapin A."/>
            <person name="Katoh M."/>
            <person name="Kawasawa Y."/>
            <person name="Kelso J."/>
            <person name="Kitamura H."/>
            <person name="Kitano H."/>
            <person name="Kollias G."/>
            <person name="Krishnan S.P."/>
            <person name="Kruger A."/>
            <person name="Kummerfeld S.K."/>
            <person name="Kurochkin I.V."/>
            <person name="Lareau L.F."/>
            <person name="Lazarevic D."/>
            <person name="Lipovich L."/>
            <person name="Liu J."/>
            <person name="Liuni S."/>
            <person name="McWilliam S."/>
            <person name="Madan Babu M."/>
            <person name="Madera M."/>
            <person name="Marchionni L."/>
            <person name="Matsuda H."/>
            <person name="Matsuzawa S."/>
            <person name="Miki H."/>
            <person name="Mignone F."/>
            <person name="Miyake S."/>
            <person name="Morris K."/>
            <person name="Mottagui-Tabar S."/>
            <person name="Mulder N."/>
            <person name="Nakano N."/>
            <person name="Nakauchi H."/>
            <person name="Ng P."/>
            <person name="Nilsson R."/>
            <person name="Nishiguchi S."/>
            <person name="Nishikawa S."/>
            <person name="Nori F."/>
            <person name="Ohara O."/>
            <person name="Okazaki Y."/>
            <person name="Orlando V."/>
            <person name="Pang K.C."/>
            <person name="Pavan W.J."/>
            <person name="Pavesi G."/>
            <person name="Pesole G."/>
            <person name="Petrovsky N."/>
            <person name="Piazza S."/>
            <person name="Reed J."/>
            <person name="Reid J.F."/>
            <person name="Ring B.Z."/>
            <person name="Ringwald M."/>
            <person name="Rost B."/>
            <person name="Ruan Y."/>
            <person name="Salzberg S.L."/>
            <person name="Sandelin A."/>
            <person name="Schneider C."/>
            <person name="Schoenbach C."/>
            <person name="Sekiguchi K."/>
            <person name="Semple C.A."/>
            <person name="Seno S."/>
            <person name="Sessa L."/>
            <person name="Sheng Y."/>
            <person name="Shibata Y."/>
            <person name="Shimada H."/>
            <person name="Shimada K."/>
            <person name="Silva D."/>
            <person name="Sinclair B."/>
            <person name="Sperling S."/>
            <person name="Stupka E."/>
            <person name="Sugiura K."/>
            <person name="Sultana R."/>
            <person name="Takenaka Y."/>
            <person name="Taki K."/>
            <person name="Tammoja K."/>
            <person name="Tan S.L."/>
            <person name="Tang S."/>
            <person name="Taylor M.S."/>
            <person name="Tegner J."/>
            <person name="Teichmann S.A."/>
            <person name="Ueda H.R."/>
            <person name="van Nimwegen E."/>
            <person name="Verardo R."/>
            <person name="Wei C.L."/>
            <person name="Yagi K."/>
            <person name="Yamanishi H."/>
            <person name="Zabarovsky E."/>
            <person name="Zhu S."/>
            <person name="Zimmer A."/>
            <person name="Hide W."/>
            <person name="Bult C."/>
            <person name="Grimmond S.M."/>
            <person name="Teasdale R.D."/>
            <person name="Liu E.T."/>
            <person name="Brusic V."/>
            <person name="Quackenbush J."/>
            <person name="Wahlestedt C."/>
            <person name="Mattick J.S."/>
            <person name="Hume D.A."/>
            <person name="Kai C."/>
            <person name="Sasaki D."/>
            <person name="Tomaru Y."/>
            <person name="Fukuda S."/>
            <person name="Kanamori-Katayama M."/>
            <person name="Suzuki M."/>
            <person name="Aoki J."/>
            <person name="Arakawa T."/>
            <person name="Iida J."/>
            <person name="Imamura K."/>
            <person name="Itoh M."/>
            <person name="Kato T."/>
            <person name="Kawaji H."/>
            <person name="Kawagashira N."/>
            <person name="Kawashima T."/>
            <person name="Kojima M."/>
            <person name="Kondo S."/>
            <person name="Konno H."/>
            <person name="Nakano K."/>
            <person name="Ninomiya N."/>
            <person name="Nishio T."/>
            <person name="Okada M."/>
            <person name="Plessy C."/>
            <person name="Shibata K."/>
            <person name="Shiraki T."/>
            <person name="Suzuki S."/>
            <person name="Tagami M."/>
            <person name="Waki K."/>
            <person name="Watahiki A."/>
            <person name="Okamura-Oho Y."/>
            <person name="Suzuki H."/>
            <person name="Kawai J."/>
            <person name="Hayashizaki Y."/>
        </authorList>
    </citation>
    <scope>NUCLEOTIDE SEQUENCE [LARGE SCALE MRNA]</scope>
    <source>
        <strain>BALB/cJ</strain>
        <strain>C57BL/6J</strain>
        <strain>NOD</strain>
        <tissue>Bone marrow</tissue>
        <tissue>Embryo</tissue>
        <tissue>Embryonic stem cell</tissue>
        <tissue>Thymus</tissue>
        <tissue>Tongue</tissue>
    </source>
</reference>
<reference key="5">
    <citation type="journal article" date="2004" name="Genome Res.">
        <title>The status, quality, and expansion of the NIH full-length cDNA project: the Mammalian Gene Collection (MGC).</title>
        <authorList>
            <consortium name="The MGC Project Team"/>
        </authorList>
    </citation>
    <scope>NUCLEOTIDE SEQUENCE [LARGE SCALE MRNA]</scope>
    <source>
        <strain>C57BL/6J</strain>
        <strain>FVB/N</strain>
        <tissue>Brain</tissue>
        <tissue>Mammary tumor</tissue>
    </source>
</reference>
<reference key="6">
    <citation type="journal article" date="1992" name="Gene">
        <title>The complexity of the Rab and Rho GTP-binding protein subfamilies revealed by a PCR cloning approach.</title>
        <authorList>
            <person name="Chavrier P."/>
            <person name="Simons K."/>
            <person name="Zerial M."/>
        </authorList>
    </citation>
    <scope>NUCLEOTIDE SEQUENCE [MRNA] OF 1-70</scope>
    <source>
        <tissue>Kidney</tissue>
    </source>
</reference>
<reference key="7">
    <citation type="submission" date="2008-02" db="UniProtKB">
        <authorList>
            <person name="Bienvenut W.V."/>
            <person name="Sandilands E."/>
            <person name="Serrels B."/>
            <person name="Brunton V.G."/>
            <person name="Frame M.C."/>
        </authorList>
    </citation>
    <scope>PROTEIN SEQUENCE OF 2-23; 57-71 AND 143-152</scope>
    <scope>CLEAVAGE OF INITIATOR METHIONINE</scope>
    <scope>ACETYLATION AT ALA-2</scope>
    <scope>IDENTIFICATION BY MASS SPECTROMETRY</scope>
    <source>
        <tissue>Embryonic fibroblast</tissue>
    </source>
</reference>
<reference key="8">
    <citation type="journal article" date="1995" name="Mol. Cell. Biol.">
        <title>Separate domains of the Ran GTPase interact with different factors to regulate nuclear protein import and RNA processing.</title>
        <authorList>
            <person name="Ren M."/>
            <person name="Villamarin A."/>
            <person name="Shih A."/>
            <person name="Coutavas E."/>
            <person name="Moore M.S."/>
            <person name="Locurcio M."/>
            <person name="Clarke V."/>
            <person name="Oppenheim J.D."/>
            <person name="D'Eustachio P."/>
            <person name="Rush M.G."/>
        </authorList>
    </citation>
    <scope>INTERACTION WITH RANBP1</scope>
</reference>
<reference key="9">
    <citation type="journal article" date="1997" name="FEBS Lett.">
        <title>RanBP1 is crucial for the release of RanGTP from importin beta-related nuclear transport factors.</title>
        <authorList>
            <person name="Bischoff F.R."/>
            <person name="Goerlich D."/>
        </authorList>
    </citation>
    <scope>INTERACTION WITH RANBP1</scope>
</reference>
<reference key="10">
    <citation type="journal article" date="2000" name="J. Biol. Chem.">
        <title>The mammalian Mog1 protein is a guanine nucleotide release factor for Ran.</title>
        <authorList>
            <person name="Steggerda S.M."/>
            <person name="Paschal B.M."/>
        </authorList>
    </citation>
    <scope>INTERACTION WITH RANGRF</scope>
    <scope>MUTAGENESIS OF GLN-69</scope>
</reference>
<reference key="11">
    <citation type="journal article" date="2008" name="J. Biol. Chem.">
        <title>RanBP10 is a cytoplasmic guanine nucleotide exchange factor that modulates noncentrosomal microtubules.</title>
        <authorList>
            <person name="Schulze H."/>
            <person name="Dose M."/>
            <person name="Korpal M."/>
            <person name="Meyer I."/>
            <person name="Italiano J.E. Jr."/>
            <person name="Shivdasani R.A."/>
        </authorList>
    </citation>
    <scope>INTERACTION WITH RANBP10</scope>
    <scope>SUBCELLULAR LOCATION</scope>
    <scope>MUTAGENESIS OF THR-24 AND GLN-69</scope>
</reference>
<reference key="12">
    <citation type="journal article" date="2010" name="Cell">
        <title>A tissue-specific atlas of mouse protein phosphorylation and expression.</title>
        <authorList>
            <person name="Huttlin E.L."/>
            <person name="Jedrychowski M.P."/>
            <person name="Elias J.E."/>
            <person name="Goswami T."/>
            <person name="Rad R."/>
            <person name="Beausoleil S.A."/>
            <person name="Villen J."/>
            <person name="Haas W."/>
            <person name="Sowa M.E."/>
            <person name="Gygi S.P."/>
        </authorList>
    </citation>
    <scope>IDENTIFICATION BY MASS SPECTROMETRY [LARGE SCALE ANALYSIS]</scope>
    <source>
        <tissue>Brain</tissue>
        <tissue>Brown adipose tissue</tissue>
        <tissue>Heart</tissue>
        <tissue>Kidney</tissue>
        <tissue>Liver</tissue>
        <tissue>Lung</tissue>
        <tissue>Pancreas</tissue>
        <tissue>Spleen</tissue>
        <tissue>Testis</tissue>
    </source>
</reference>
<reference key="13">
    <citation type="journal article" date="2013" name="Mol. Cell">
        <title>SIRT5-mediated lysine desuccinylation impacts diverse metabolic pathways.</title>
        <authorList>
            <person name="Park J."/>
            <person name="Chen Y."/>
            <person name="Tishkoff D.X."/>
            <person name="Peng C."/>
            <person name="Tan M."/>
            <person name="Dai L."/>
            <person name="Xie Z."/>
            <person name="Zhang Y."/>
            <person name="Zwaans B.M."/>
            <person name="Skinner M.E."/>
            <person name="Lombard D.B."/>
            <person name="Zhao Y."/>
        </authorList>
    </citation>
    <scope>ACETYLATION [LARGE SCALE ANALYSIS] AT LYS-159</scope>
    <scope>SUCCINYLATION [LARGE SCALE ANALYSIS] AT LYS-159</scope>
    <scope>IDENTIFICATION BY MASS SPECTROMETRY [LARGE SCALE ANALYSIS]</scope>
    <source>
        <tissue>Embryonic fibroblast</tissue>
    </source>
</reference>
<reference key="14">
    <citation type="journal article" date="2015" name="J. Biol. Chem.">
        <title>MYCBP2 is a guanosine exchange factor for Ran protein and determines its localization in neurons of dorsal root ganglia.</title>
        <authorList>
            <person name="Doerr A."/>
            <person name="Pierre S."/>
            <person name="Zhang D.D."/>
            <person name="Henke M."/>
            <person name="Holland S."/>
            <person name="Scholich K."/>
        </authorList>
    </citation>
    <scope>INTERACTION WITH MYCBP2</scope>
</reference>
<reference key="15">
    <citation type="journal article" date="2015" name="PLoS ONE">
        <title>The inner nuclear membrane protein Nemp1 is a new type of RanGTP-binding protein in eukaryotes.</title>
        <authorList>
            <person name="Shibano T."/>
            <person name="Mamada H."/>
            <person name="Hakuno F."/>
            <person name="Takahashi S."/>
            <person name="Taira M."/>
        </authorList>
    </citation>
    <scope>INTERACTION WITH NEMP1 AND KPNB1</scope>
    <scope>SUBCELLULAR LOCATION</scope>
    <scope>MUTAGENESIS OF THR-24; THR-42 AND GLN-69</scope>
</reference>